<organism>
    <name type="scientific">Halalkalibacterium halodurans (strain ATCC BAA-125 / DSM 18197 / FERM 7344 / JCM 9153 / C-125)</name>
    <name type="common">Bacillus halodurans</name>
    <dbReference type="NCBI Taxonomy" id="272558"/>
    <lineage>
        <taxon>Bacteria</taxon>
        <taxon>Bacillati</taxon>
        <taxon>Bacillota</taxon>
        <taxon>Bacilli</taxon>
        <taxon>Bacillales</taxon>
        <taxon>Bacillaceae</taxon>
        <taxon>Halalkalibacterium (ex Joshi et al. 2022)</taxon>
    </lineage>
</organism>
<protein>
    <recommendedName>
        <fullName evidence="1">Glycogen synthase</fullName>
        <ecNumber evidence="1">2.4.1.21</ecNumber>
    </recommendedName>
    <alternativeName>
        <fullName evidence="1">Starch [bacterial glycogen] synthase</fullName>
    </alternativeName>
</protein>
<gene>
    <name evidence="1" type="primary">glgA</name>
    <name type="ordered locus">BH1085</name>
</gene>
<reference key="1">
    <citation type="journal article" date="2000" name="Nucleic Acids Res.">
        <title>Complete genome sequence of the alkaliphilic bacterium Bacillus halodurans and genomic sequence comparison with Bacillus subtilis.</title>
        <authorList>
            <person name="Takami H."/>
            <person name="Nakasone K."/>
            <person name="Takaki Y."/>
            <person name="Maeno G."/>
            <person name="Sasaki R."/>
            <person name="Masui N."/>
            <person name="Fuji F."/>
            <person name="Hirama C."/>
            <person name="Nakamura Y."/>
            <person name="Ogasawara N."/>
            <person name="Kuhara S."/>
            <person name="Horikoshi K."/>
        </authorList>
    </citation>
    <scope>NUCLEOTIDE SEQUENCE [LARGE SCALE GENOMIC DNA]</scope>
    <source>
        <strain>ATCC BAA-125 / DSM 18197 / FERM 7344 / JCM 9153 / C-125</strain>
    </source>
</reference>
<dbReference type="EC" id="2.4.1.21" evidence="1"/>
<dbReference type="EMBL" id="BA000004">
    <property type="protein sequence ID" value="BAB04804.1"/>
    <property type="molecule type" value="Genomic_DNA"/>
</dbReference>
<dbReference type="PIR" id="E83785">
    <property type="entry name" value="E83785"/>
</dbReference>
<dbReference type="RefSeq" id="WP_010897255.1">
    <property type="nucleotide sequence ID" value="NC_002570.2"/>
</dbReference>
<dbReference type="SMR" id="Q9KDX6"/>
<dbReference type="STRING" id="272558.gene:10726979"/>
<dbReference type="CAZy" id="GT5">
    <property type="family name" value="Glycosyltransferase Family 5"/>
</dbReference>
<dbReference type="DNASU" id="892422"/>
<dbReference type="KEGG" id="bha:BH1085"/>
<dbReference type="eggNOG" id="COG0297">
    <property type="taxonomic scope" value="Bacteria"/>
</dbReference>
<dbReference type="HOGENOM" id="CLU_009583_18_2_9"/>
<dbReference type="OrthoDB" id="9808590at2"/>
<dbReference type="UniPathway" id="UPA00164"/>
<dbReference type="Proteomes" id="UP000001258">
    <property type="component" value="Chromosome"/>
</dbReference>
<dbReference type="GO" id="GO:0009011">
    <property type="term" value="F:alpha-1,4-glucan glucosyltransferase (ADP-glucose donor) activity"/>
    <property type="evidence" value="ECO:0007669"/>
    <property type="project" value="UniProtKB-UniRule"/>
</dbReference>
<dbReference type="GO" id="GO:0004373">
    <property type="term" value="F:alpha-1,4-glucan glucosyltransferase (UDP-glucose donor) activity"/>
    <property type="evidence" value="ECO:0007669"/>
    <property type="project" value="InterPro"/>
</dbReference>
<dbReference type="GO" id="GO:0005978">
    <property type="term" value="P:glycogen biosynthetic process"/>
    <property type="evidence" value="ECO:0007669"/>
    <property type="project" value="UniProtKB-UniRule"/>
</dbReference>
<dbReference type="CDD" id="cd03791">
    <property type="entry name" value="GT5_Glycogen_synthase_DULL1-like"/>
    <property type="match status" value="1"/>
</dbReference>
<dbReference type="Gene3D" id="3.40.50.2000">
    <property type="entry name" value="Glycogen Phosphorylase B"/>
    <property type="match status" value="2"/>
</dbReference>
<dbReference type="HAMAP" id="MF_00484">
    <property type="entry name" value="Glycogen_synth"/>
    <property type="match status" value="1"/>
</dbReference>
<dbReference type="InterPro" id="IPR001296">
    <property type="entry name" value="Glyco_trans_1"/>
</dbReference>
<dbReference type="InterPro" id="IPR011835">
    <property type="entry name" value="GS/SS"/>
</dbReference>
<dbReference type="InterPro" id="IPR013534">
    <property type="entry name" value="Starch_synth_cat_dom"/>
</dbReference>
<dbReference type="NCBIfam" id="TIGR02095">
    <property type="entry name" value="glgA"/>
    <property type="match status" value="1"/>
</dbReference>
<dbReference type="NCBIfam" id="NF001898">
    <property type="entry name" value="PRK00654.1-1"/>
    <property type="match status" value="1"/>
</dbReference>
<dbReference type="PANTHER" id="PTHR45825:SF11">
    <property type="entry name" value="ALPHA AMYLASE DOMAIN-CONTAINING PROTEIN"/>
    <property type="match status" value="1"/>
</dbReference>
<dbReference type="PANTHER" id="PTHR45825">
    <property type="entry name" value="GRANULE-BOUND STARCH SYNTHASE 1, CHLOROPLASTIC/AMYLOPLASTIC"/>
    <property type="match status" value="1"/>
</dbReference>
<dbReference type="Pfam" id="PF08323">
    <property type="entry name" value="Glyco_transf_5"/>
    <property type="match status" value="1"/>
</dbReference>
<dbReference type="Pfam" id="PF00534">
    <property type="entry name" value="Glycos_transf_1"/>
    <property type="match status" value="1"/>
</dbReference>
<dbReference type="SUPFAM" id="SSF53756">
    <property type="entry name" value="UDP-Glycosyltransferase/glycogen phosphorylase"/>
    <property type="match status" value="1"/>
</dbReference>
<sequence length="476" mass="54348">MNVLHVASECNPFFKTGGLADVLGSLPKALIKQGINVSVILPKYGHLSDEWQNQLTLKKSFTVSVTWRNQYCGLEQFVDQGVTYYFIDNEYYFKRERLYGYLDEAERFTFFNHAVLSSLPFLDESPDLIHCHDWQSGLIPAYMKTGSVENPVPTVFTIHNLRYQGAFPPDVFRELLHFAPEHFAGLEMDGAINFLKGALVHSDRVTTVSPTYAQEIQTPAFGEGLHGLLHQERGKTRGILNGIDLEDFDPKTDPHVTYPYKHNQMEKRKNKQVIQRLFELPERKDIPLIAMVSRLVEEKGVPLLTQIAGELVTTENVQLAILGTGDPSLEDQLHHLASLHPHQISFKCVFAEPLARKLYAGADLFIMPSRFEPCGLSQMISLRYETVPIVRETGGLYDTIQSYNEEIGEGNGFSFTHYNAHDFLYTIKRALRFYRTEKEWENLLLNIYSSEVGWDVSAKQYTALYEEILGKRKVEA</sequence>
<evidence type="ECO:0000255" key="1">
    <source>
        <dbReference type="HAMAP-Rule" id="MF_00484"/>
    </source>
</evidence>
<keyword id="KW-0320">Glycogen biosynthesis</keyword>
<keyword id="KW-0328">Glycosyltransferase</keyword>
<keyword id="KW-1185">Reference proteome</keyword>
<keyword id="KW-0808">Transferase</keyword>
<feature type="chain" id="PRO_0000188594" description="Glycogen synthase">
    <location>
        <begin position="1"/>
        <end position="476"/>
    </location>
</feature>
<feature type="binding site" evidence="1">
    <location>
        <position position="15"/>
    </location>
    <ligand>
        <name>ADP-alpha-D-glucose</name>
        <dbReference type="ChEBI" id="CHEBI:57498"/>
    </ligand>
</feature>
<accession>Q9KDX6</accession>
<proteinExistence type="inferred from homology"/>
<name>GLGA_HALH5</name>
<comment type="function">
    <text evidence="1">Synthesizes alpha-1,4-glucan chains using ADP-glucose.</text>
</comment>
<comment type="catalytic activity">
    <reaction evidence="1">
        <text>[(1-&gt;4)-alpha-D-glucosyl](n) + ADP-alpha-D-glucose = [(1-&gt;4)-alpha-D-glucosyl](n+1) + ADP + H(+)</text>
        <dbReference type="Rhea" id="RHEA:18189"/>
        <dbReference type="Rhea" id="RHEA-COMP:9584"/>
        <dbReference type="Rhea" id="RHEA-COMP:9587"/>
        <dbReference type="ChEBI" id="CHEBI:15378"/>
        <dbReference type="ChEBI" id="CHEBI:15444"/>
        <dbReference type="ChEBI" id="CHEBI:57498"/>
        <dbReference type="ChEBI" id="CHEBI:456216"/>
        <dbReference type="EC" id="2.4.1.21"/>
    </reaction>
</comment>
<comment type="pathway">
    <text evidence="1">Glycan biosynthesis; glycogen biosynthesis.</text>
</comment>
<comment type="similarity">
    <text evidence="1">Belongs to the glycosyltransferase 1 family. Bacterial/plant glycogen synthase subfamily.</text>
</comment>